<keyword id="KW-0472">Membrane</keyword>
<keyword id="KW-0496">Mitochondrion</keyword>
<keyword id="KW-0999">Mitochondrion inner membrane</keyword>
<keyword id="KW-1185">Reference proteome</keyword>
<keyword id="KW-0812">Transmembrane</keyword>
<keyword id="KW-1133">Transmembrane helix</keyword>
<evidence type="ECO:0000250" key="1"/>
<evidence type="ECO:0000255" key="2"/>
<evidence type="ECO:0000305" key="3"/>
<comment type="function">
    <text evidence="1">This protein is one of the nuclear-coded polypeptide chains of cytochrome c oxidase, the terminal oxidase in mitochondrial electron transport.</text>
</comment>
<comment type="subcellular location">
    <subcellularLocation>
        <location evidence="1">Mitochondrion inner membrane</location>
    </subcellularLocation>
</comment>
<comment type="similarity">
    <text evidence="3">Belongs to the cytochrome c oxidase subunit 5C family.</text>
</comment>
<organism>
    <name type="scientific">Arabidopsis thaliana</name>
    <name type="common">Mouse-ear cress</name>
    <dbReference type="NCBI Taxonomy" id="3702"/>
    <lineage>
        <taxon>Eukaryota</taxon>
        <taxon>Viridiplantae</taxon>
        <taxon>Streptophyta</taxon>
        <taxon>Embryophyta</taxon>
        <taxon>Tracheophyta</taxon>
        <taxon>Spermatophyta</taxon>
        <taxon>Magnoliopsida</taxon>
        <taxon>eudicotyledons</taxon>
        <taxon>Gunneridae</taxon>
        <taxon>Pentapetalae</taxon>
        <taxon>rosids</taxon>
        <taxon>malvids</taxon>
        <taxon>Brassicales</taxon>
        <taxon>Brassicaceae</taxon>
        <taxon>Camelineae</taxon>
        <taxon>Arabidopsis</taxon>
    </lineage>
</organism>
<proteinExistence type="inferred from homology"/>
<gene>
    <name type="ordered locus">At5g40382</name>
    <name type="ORF">MPO12.11</name>
</gene>
<name>CX5C4_ARATH</name>
<reference key="1">
    <citation type="journal article" date="1997" name="DNA Res.">
        <title>Structural analysis of Arabidopsis thaliana chromosome 5. II. Sequence features of the regions of 1,044,062 bp covered by thirteen physically assigned P1 clones.</title>
        <authorList>
            <person name="Kotani H."/>
            <person name="Nakamura Y."/>
            <person name="Sato S."/>
            <person name="Kaneko T."/>
            <person name="Asamizu E."/>
            <person name="Miyajima N."/>
            <person name="Tabata S."/>
        </authorList>
    </citation>
    <scope>NUCLEOTIDE SEQUENCE [LARGE SCALE GENOMIC DNA]</scope>
    <source>
        <strain>cv. Columbia</strain>
    </source>
</reference>
<reference key="2">
    <citation type="journal article" date="2017" name="Plant J.">
        <title>Araport11: a complete reannotation of the Arabidopsis thaliana reference genome.</title>
        <authorList>
            <person name="Cheng C.Y."/>
            <person name="Krishnakumar V."/>
            <person name="Chan A.P."/>
            <person name="Thibaud-Nissen F."/>
            <person name="Schobel S."/>
            <person name="Town C.D."/>
        </authorList>
    </citation>
    <scope>GENOME REANNOTATION</scope>
    <source>
        <strain>cv. Columbia</strain>
    </source>
</reference>
<feature type="chain" id="PRO_0000128188" description="Putative cytochrome c oxidase subunit 5C-4">
    <location>
        <begin position="1"/>
        <end position="65"/>
    </location>
</feature>
<feature type="transmembrane region" description="Helical" evidence="2">
    <location>
        <begin position="20"/>
        <end position="37"/>
    </location>
</feature>
<sequence>MANVQKIGKAVYKGPSVVKEIIYGITLGFAVGGLWKMHHWNNQRRTKEFYDLLEKGEISVVVEDE</sequence>
<accession>Q9FNE0</accession>
<dbReference type="EMBL" id="AB006702">
    <property type="protein sequence ID" value="BAB11594.1"/>
    <property type="molecule type" value="Genomic_DNA"/>
</dbReference>
<dbReference type="EMBL" id="CP002688">
    <property type="protein sequence ID" value="AED94541.1"/>
    <property type="molecule type" value="Genomic_DNA"/>
</dbReference>
<dbReference type="EMBL" id="CP002688">
    <property type="protein sequence ID" value="ANM70029.1"/>
    <property type="molecule type" value="Genomic_DNA"/>
</dbReference>
<dbReference type="RefSeq" id="NP_001119340.1">
    <property type="nucleotide sequence ID" value="NM_001125868.2"/>
</dbReference>
<dbReference type="RefSeq" id="NP_001318711.1">
    <property type="nucleotide sequence ID" value="NM_001344325.1"/>
</dbReference>
<dbReference type="SMR" id="Q9FNE0"/>
<dbReference type="PaxDb" id="3702-AT5G40382.1"/>
<dbReference type="ProteomicsDB" id="220428"/>
<dbReference type="EnsemblPlants" id="AT5G40382.1">
    <property type="protein sequence ID" value="AT5G40382.1"/>
    <property type="gene ID" value="AT5G40382"/>
</dbReference>
<dbReference type="EnsemblPlants" id="AT5G40382.2">
    <property type="protein sequence ID" value="AT5G40382.2"/>
    <property type="gene ID" value="AT5G40382"/>
</dbReference>
<dbReference type="GeneID" id="6241321"/>
<dbReference type="Gramene" id="AT5G40382.1">
    <property type="protein sequence ID" value="AT5G40382.1"/>
    <property type="gene ID" value="AT5G40382"/>
</dbReference>
<dbReference type="Gramene" id="AT5G40382.2">
    <property type="protein sequence ID" value="AT5G40382.2"/>
    <property type="gene ID" value="AT5G40382"/>
</dbReference>
<dbReference type="KEGG" id="ath:AT5G40382"/>
<dbReference type="Araport" id="AT5G40382"/>
<dbReference type="TAIR" id="AT5G40382"/>
<dbReference type="eggNOG" id="ENOG502S8H1">
    <property type="taxonomic scope" value="Eukaryota"/>
</dbReference>
<dbReference type="HOGENOM" id="CLU_177335_1_0_1"/>
<dbReference type="InParanoid" id="Q9FNE0"/>
<dbReference type="OMA" id="VGGLWKM"/>
<dbReference type="PhylomeDB" id="Q9FNE0"/>
<dbReference type="PRO" id="PR:Q9FNE0"/>
<dbReference type="Proteomes" id="UP000006548">
    <property type="component" value="Chromosome 5"/>
</dbReference>
<dbReference type="ExpressionAtlas" id="Q9FNE0">
    <property type="expression patterns" value="baseline and differential"/>
</dbReference>
<dbReference type="GO" id="GO:0005743">
    <property type="term" value="C:mitochondrial inner membrane"/>
    <property type="evidence" value="ECO:0007669"/>
    <property type="project" value="UniProtKB-SubCell"/>
</dbReference>
<dbReference type="InterPro" id="IPR008432">
    <property type="entry name" value="COX5C"/>
</dbReference>
<dbReference type="PANTHER" id="PTHR34372">
    <property type="entry name" value="CYTOCHROME C OXIDASE SUBUNIT 5C-2-RELATED"/>
    <property type="match status" value="1"/>
</dbReference>
<dbReference type="PANTHER" id="PTHR34372:SF3">
    <property type="entry name" value="CYTOCHROME C OXIDASE SUBUNIT 5C-4-RELATED"/>
    <property type="match status" value="1"/>
</dbReference>
<dbReference type="PIRSF" id="PIRSF038131">
    <property type="entry name" value="COX5C"/>
    <property type="match status" value="1"/>
</dbReference>
<protein>
    <recommendedName>
        <fullName>Putative cytochrome c oxidase subunit 5C-4</fullName>
    </recommendedName>
    <alternativeName>
        <fullName>Cytochrome c oxidase polypeptide Vc-4</fullName>
    </alternativeName>
</protein>